<proteinExistence type="inferred from homology"/>
<protein>
    <recommendedName>
        <fullName evidence="1">DNA mismatch repair protein MutL</fullName>
    </recommendedName>
</protein>
<dbReference type="EMBL" id="FM177140">
    <property type="protein sequence ID" value="CAQ67482.1"/>
    <property type="molecule type" value="Genomic_DNA"/>
</dbReference>
<dbReference type="SMR" id="B3W9W3"/>
<dbReference type="KEGG" id="lcb:LCABL_24160"/>
<dbReference type="HOGENOM" id="CLU_004131_4_1_9"/>
<dbReference type="GO" id="GO:0032300">
    <property type="term" value="C:mismatch repair complex"/>
    <property type="evidence" value="ECO:0007669"/>
    <property type="project" value="InterPro"/>
</dbReference>
<dbReference type="GO" id="GO:0005524">
    <property type="term" value="F:ATP binding"/>
    <property type="evidence" value="ECO:0007669"/>
    <property type="project" value="InterPro"/>
</dbReference>
<dbReference type="GO" id="GO:0016887">
    <property type="term" value="F:ATP hydrolysis activity"/>
    <property type="evidence" value="ECO:0007669"/>
    <property type="project" value="InterPro"/>
</dbReference>
<dbReference type="GO" id="GO:0140664">
    <property type="term" value="F:ATP-dependent DNA damage sensor activity"/>
    <property type="evidence" value="ECO:0007669"/>
    <property type="project" value="InterPro"/>
</dbReference>
<dbReference type="GO" id="GO:0030983">
    <property type="term" value="F:mismatched DNA binding"/>
    <property type="evidence" value="ECO:0007669"/>
    <property type="project" value="InterPro"/>
</dbReference>
<dbReference type="GO" id="GO:0006298">
    <property type="term" value="P:mismatch repair"/>
    <property type="evidence" value="ECO:0007669"/>
    <property type="project" value="UniProtKB-UniRule"/>
</dbReference>
<dbReference type="CDD" id="cd16926">
    <property type="entry name" value="HATPase_MutL-MLH-PMS-like"/>
    <property type="match status" value="1"/>
</dbReference>
<dbReference type="CDD" id="cd00782">
    <property type="entry name" value="MutL_Trans"/>
    <property type="match status" value="1"/>
</dbReference>
<dbReference type="FunFam" id="3.30.565.10:FF:000003">
    <property type="entry name" value="DNA mismatch repair endonuclease MutL"/>
    <property type="match status" value="1"/>
</dbReference>
<dbReference type="Gene3D" id="3.30.230.10">
    <property type="match status" value="1"/>
</dbReference>
<dbReference type="Gene3D" id="3.30.565.10">
    <property type="entry name" value="Histidine kinase-like ATPase, C-terminal domain"/>
    <property type="match status" value="1"/>
</dbReference>
<dbReference type="Gene3D" id="3.30.1540.20">
    <property type="entry name" value="MutL, C-terminal domain, dimerisation subdomain"/>
    <property type="match status" value="1"/>
</dbReference>
<dbReference type="Gene3D" id="3.30.1370.100">
    <property type="entry name" value="MutL, C-terminal domain, regulatory subdomain"/>
    <property type="match status" value="1"/>
</dbReference>
<dbReference type="HAMAP" id="MF_00149">
    <property type="entry name" value="DNA_mis_repair"/>
    <property type="match status" value="1"/>
</dbReference>
<dbReference type="InterPro" id="IPR014762">
    <property type="entry name" value="DNA_mismatch_repair_CS"/>
</dbReference>
<dbReference type="InterPro" id="IPR020667">
    <property type="entry name" value="DNA_mismatch_repair_MutL"/>
</dbReference>
<dbReference type="InterPro" id="IPR013507">
    <property type="entry name" value="DNA_mismatch_S5_2-like"/>
</dbReference>
<dbReference type="InterPro" id="IPR036890">
    <property type="entry name" value="HATPase_C_sf"/>
</dbReference>
<dbReference type="InterPro" id="IPR002099">
    <property type="entry name" value="MutL/Mlh/PMS"/>
</dbReference>
<dbReference type="InterPro" id="IPR038973">
    <property type="entry name" value="MutL/Mlh/Pms-like"/>
</dbReference>
<dbReference type="InterPro" id="IPR014790">
    <property type="entry name" value="MutL_C"/>
</dbReference>
<dbReference type="InterPro" id="IPR042120">
    <property type="entry name" value="MutL_C_dimsub"/>
</dbReference>
<dbReference type="InterPro" id="IPR042121">
    <property type="entry name" value="MutL_C_regsub"/>
</dbReference>
<dbReference type="InterPro" id="IPR037198">
    <property type="entry name" value="MutL_C_sf"/>
</dbReference>
<dbReference type="InterPro" id="IPR020568">
    <property type="entry name" value="Ribosomal_Su5_D2-typ_SF"/>
</dbReference>
<dbReference type="InterPro" id="IPR014721">
    <property type="entry name" value="Ribsml_uS5_D2-typ_fold_subgr"/>
</dbReference>
<dbReference type="NCBIfam" id="TIGR00585">
    <property type="entry name" value="mutl"/>
    <property type="match status" value="1"/>
</dbReference>
<dbReference type="NCBIfam" id="NF000950">
    <property type="entry name" value="PRK00095.1-3"/>
    <property type="match status" value="1"/>
</dbReference>
<dbReference type="PANTHER" id="PTHR10073">
    <property type="entry name" value="DNA MISMATCH REPAIR PROTEIN MLH, PMS, MUTL"/>
    <property type="match status" value="1"/>
</dbReference>
<dbReference type="PANTHER" id="PTHR10073:SF12">
    <property type="entry name" value="DNA MISMATCH REPAIR PROTEIN MLH1"/>
    <property type="match status" value="1"/>
</dbReference>
<dbReference type="Pfam" id="PF01119">
    <property type="entry name" value="DNA_mis_repair"/>
    <property type="match status" value="1"/>
</dbReference>
<dbReference type="Pfam" id="PF13589">
    <property type="entry name" value="HATPase_c_3"/>
    <property type="match status" value="1"/>
</dbReference>
<dbReference type="Pfam" id="PF08676">
    <property type="entry name" value="MutL_C"/>
    <property type="match status" value="1"/>
</dbReference>
<dbReference type="SMART" id="SM01340">
    <property type="entry name" value="DNA_mis_repair"/>
    <property type="match status" value="1"/>
</dbReference>
<dbReference type="SMART" id="SM00853">
    <property type="entry name" value="MutL_C"/>
    <property type="match status" value="1"/>
</dbReference>
<dbReference type="SUPFAM" id="SSF55874">
    <property type="entry name" value="ATPase domain of HSP90 chaperone/DNA topoisomerase II/histidine kinase"/>
    <property type="match status" value="1"/>
</dbReference>
<dbReference type="SUPFAM" id="SSF118116">
    <property type="entry name" value="DNA mismatch repair protein MutL"/>
    <property type="match status" value="1"/>
</dbReference>
<dbReference type="SUPFAM" id="SSF54211">
    <property type="entry name" value="Ribosomal protein S5 domain 2-like"/>
    <property type="match status" value="1"/>
</dbReference>
<dbReference type="PROSITE" id="PS00058">
    <property type="entry name" value="DNA_MISMATCH_REPAIR_1"/>
    <property type="match status" value="1"/>
</dbReference>
<feature type="chain" id="PRO_1000096659" description="DNA mismatch repair protein MutL">
    <location>
        <begin position="1"/>
        <end position="651"/>
    </location>
</feature>
<feature type="region of interest" description="Disordered" evidence="2">
    <location>
        <begin position="383"/>
        <end position="405"/>
    </location>
</feature>
<keyword id="KW-0227">DNA damage</keyword>
<keyword id="KW-0234">DNA repair</keyword>
<name>MUTL_LACCB</name>
<reference key="1">
    <citation type="submission" date="2008-06" db="EMBL/GenBank/DDBJ databases">
        <title>Lactobacillus casei BL23 complete genome sequence.</title>
        <authorList>
            <person name="Maze A."/>
            <person name="Boel G."/>
            <person name="Bourand A."/>
            <person name="Loux V."/>
            <person name="Gibrat J.F."/>
            <person name="Zuniga M."/>
            <person name="Hartke A."/>
            <person name="Deutscher J."/>
        </authorList>
    </citation>
    <scope>NUCLEOTIDE SEQUENCE [LARGE SCALE GENOMIC DNA]</scope>
    <source>
        <strain>BL23</strain>
    </source>
</reference>
<evidence type="ECO:0000255" key="1">
    <source>
        <dbReference type="HAMAP-Rule" id="MF_00149"/>
    </source>
</evidence>
<evidence type="ECO:0000256" key="2">
    <source>
        <dbReference type="SAM" id="MobiDB-lite"/>
    </source>
</evidence>
<sequence length="651" mass="72173">MPKIHQLSATLSNQIAAGEVIERPASVVKELVENSIDAQATQIDVLISAAGLQEIRVSDNGIGIAPDDVATAFLRHATSKILTTRDLFNVHSLGFRGEALASIAAVADVKLTTAMDSGIGTQIHVKGGEVEAQSTAAHRRGTDVEVNDLFFNTPARLKYMKSQQTELGKIVDIVSRLAMANPDIAFTVSHDGNMVVRTAGQGDLRQTLAGIYGLSVARSMVDFKAQDLDFRVSGLTSLPETTRASRNYLSLVVNGRYIKNFQLTKAVIAGYGSKLMVGRYPMGVINIEMDAALVDVNVHPTKAEVRLSKEDQLSHLLSEAIRTRLAKENLIPDALDNLPKRERYDLDQLELTLNKISPKTMPSVQPQQGQQLRENTTTNLADTAAEEPTPAPTSPDLEIGDLDDQPIFNEPQRLAAWDQRYQRLASNVVPTLMADEPEPDISHVESAERFPNLTYLAQVHGTYLLAESGDGLYILDQHAAQERVNYEYYRQAIGEVSNDQQHLLVPIVLDYSAADAISIRDHRDVLESVGLYLEDFGQNSFVVEHHPTWFKAGQEEDTIKEMVDWVLRDGRMTVAAFREKTAIMMSCKRAIKANHHLDDRQARALLQKLPECENPFNCPHGRPVLVHFSNTDLEKMFKRIQDSHESGEMQA</sequence>
<organism>
    <name type="scientific">Lacticaseibacillus casei (strain BL23)</name>
    <name type="common">Lactobacillus casei</name>
    <dbReference type="NCBI Taxonomy" id="543734"/>
    <lineage>
        <taxon>Bacteria</taxon>
        <taxon>Bacillati</taxon>
        <taxon>Bacillota</taxon>
        <taxon>Bacilli</taxon>
        <taxon>Lactobacillales</taxon>
        <taxon>Lactobacillaceae</taxon>
        <taxon>Lacticaseibacillus</taxon>
    </lineage>
</organism>
<gene>
    <name evidence="1" type="primary">mutL</name>
    <name type="ordered locus">LCABL_24160</name>
</gene>
<accession>B3W9W3</accession>
<comment type="function">
    <text evidence="1">This protein is involved in the repair of mismatches in DNA. It is required for dam-dependent methyl-directed DNA mismatch repair. May act as a 'molecular matchmaker', a protein that promotes the formation of a stable complex between two or more DNA-binding proteins in an ATP-dependent manner without itself being part of a final effector complex.</text>
</comment>
<comment type="similarity">
    <text evidence="1">Belongs to the DNA mismatch repair MutL/HexB family.</text>
</comment>